<organism>
    <name type="scientific">Streptomyces coelicolor (strain ATCC BAA-471 / A3(2) / M145)</name>
    <dbReference type="NCBI Taxonomy" id="100226"/>
    <lineage>
        <taxon>Bacteria</taxon>
        <taxon>Bacillati</taxon>
        <taxon>Actinomycetota</taxon>
        <taxon>Actinomycetes</taxon>
        <taxon>Kitasatosporales</taxon>
        <taxon>Streptomycetaceae</taxon>
        <taxon>Streptomyces</taxon>
        <taxon>Streptomyces albidoflavus group</taxon>
    </lineage>
</organism>
<evidence type="ECO:0000255" key="1">
    <source>
        <dbReference type="HAMAP-Rule" id="MF_00198"/>
    </source>
</evidence>
<comment type="function">
    <text evidence="1">Catalyzes the irreversible transfer of a propylamine group from the amino donor S-adenosylmethioninamine (decarboxy-AdoMet) to putrescine (1,4-diaminobutane) to yield spermidine.</text>
</comment>
<comment type="catalytic activity">
    <reaction evidence="1">
        <text>S-adenosyl 3-(methylsulfanyl)propylamine + putrescine = S-methyl-5'-thioadenosine + spermidine + H(+)</text>
        <dbReference type="Rhea" id="RHEA:12721"/>
        <dbReference type="ChEBI" id="CHEBI:15378"/>
        <dbReference type="ChEBI" id="CHEBI:17509"/>
        <dbReference type="ChEBI" id="CHEBI:57443"/>
        <dbReference type="ChEBI" id="CHEBI:57834"/>
        <dbReference type="ChEBI" id="CHEBI:326268"/>
        <dbReference type="EC" id="2.5.1.16"/>
    </reaction>
</comment>
<comment type="pathway">
    <text evidence="1">Amine and polyamine biosynthesis; spermidine biosynthesis; spermidine from putrescine: step 1/1.</text>
</comment>
<comment type="subunit">
    <text evidence="1">Homodimer or homotetramer.</text>
</comment>
<comment type="subcellular location">
    <subcellularLocation>
        <location evidence="1">Cell membrane</location>
        <topology evidence="1">Multi-pass membrane protein</topology>
    </subcellularLocation>
</comment>
<comment type="similarity">
    <text evidence="1">Belongs to the spermidine/spermine synthase family.</text>
</comment>
<name>SPEE1_STRCO</name>
<feature type="chain" id="PRO_0000156508" description="Polyamine aminopropyltransferase 1">
    <location>
        <begin position="1"/>
        <end position="531"/>
    </location>
</feature>
<feature type="transmembrane region" description="Helical" evidence="1">
    <location>
        <begin position="27"/>
        <end position="47"/>
    </location>
</feature>
<feature type="transmembrane region" description="Helical" evidence="1">
    <location>
        <begin position="59"/>
        <end position="79"/>
    </location>
</feature>
<feature type="transmembrane region" description="Helical" evidence="1">
    <location>
        <begin position="96"/>
        <end position="116"/>
    </location>
</feature>
<feature type="transmembrane region" description="Helical" evidence="1">
    <location>
        <begin position="122"/>
        <end position="142"/>
    </location>
</feature>
<feature type="transmembrane region" description="Helical" evidence="1">
    <location>
        <begin position="160"/>
        <end position="180"/>
    </location>
</feature>
<feature type="transmembrane region" description="Helical" evidence="1">
    <location>
        <begin position="188"/>
        <end position="208"/>
    </location>
</feature>
<feature type="transmembrane region" description="Helical" evidence="1">
    <location>
        <begin position="218"/>
        <end position="238"/>
    </location>
</feature>
<feature type="domain" description="PABS" evidence="1">
    <location>
        <begin position="233"/>
        <end position="471"/>
    </location>
</feature>
<feature type="region of interest" description="Spermidine synthase">
    <location>
        <begin position="205"/>
        <end position="476"/>
    </location>
</feature>
<feature type="active site" description="Proton acceptor" evidence="1">
    <location>
        <position position="392"/>
    </location>
</feature>
<feature type="binding site" evidence="1">
    <location>
        <position position="263"/>
    </location>
    <ligand>
        <name>S-methyl-5'-thioadenosine</name>
        <dbReference type="ChEBI" id="CHEBI:17509"/>
    </ligand>
</feature>
<feature type="binding site" evidence="1">
    <location>
        <position position="298"/>
    </location>
    <ligand>
        <name>spermidine</name>
        <dbReference type="ChEBI" id="CHEBI:57834"/>
    </ligand>
</feature>
<feature type="binding site" evidence="1">
    <location>
        <position position="320"/>
    </location>
    <ligand>
        <name>spermidine</name>
        <dbReference type="ChEBI" id="CHEBI:57834"/>
    </ligand>
</feature>
<feature type="binding site" evidence="1">
    <location>
        <position position="340"/>
    </location>
    <ligand>
        <name>S-methyl-5'-thioadenosine</name>
        <dbReference type="ChEBI" id="CHEBI:17509"/>
    </ligand>
</feature>
<feature type="binding site" evidence="1">
    <location>
        <begin position="374"/>
        <end position="375"/>
    </location>
    <ligand>
        <name>S-methyl-5'-thioadenosine</name>
        <dbReference type="ChEBI" id="CHEBI:17509"/>
    </ligand>
</feature>
<gene>
    <name evidence="1" type="primary">speE1</name>
    <name type="ordered locus">SCO2455</name>
    <name type="ORF">SCC24.26c</name>
</gene>
<dbReference type="EC" id="2.5.1.16" evidence="1"/>
<dbReference type="EMBL" id="AL939112">
    <property type="protein sequence ID" value="CAB86120.1"/>
    <property type="molecule type" value="Genomic_DNA"/>
</dbReference>
<dbReference type="RefSeq" id="NP_626698.1">
    <property type="nucleotide sequence ID" value="NC_003888.3"/>
</dbReference>
<dbReference type="RefSeq" id="WP_003976349.1">
    <property type="nucleotide sequence ID" value="NZ_VNID01000001.1"/>
</dbReference>
<dbReference type="SMR" id="Q9L091"/>
<dbReference type="FunCoup" id="Q9L091">
    <property type="interactions" value="35"/>
</dbReference>
<dbReference type="STRING" id="100226.gene:17760054"/>
<dbReference type="PaxDb" id="100226-SCO2455"/>
<dbReference type="KEGG" id="sco:SCO2455"/>
<dbReference type="PATRIC" id="fig|100226.15.peg.2497"/>
<dbReference type="eggNOG" id="COG4262">
    <property type="taxonomic scope" value="Bacteria"/>
</dbReference>
<dbReference type="HOGENOM" id="CLU_034289_0_0_11"/>
<dbReference type="InParanoid" id="Q9L091"/>
<dbReference type="OrthoDB" id="9793120at2"/>
<dbReference type="PhylomeDB" id="Q9L091"/>
<dbReference type="UniPathway" id="UPA00248">
    <property type="reaction ID" value="UER00314"/>
</dbReference>
<dbReference type="Proteomes" id="UP000001973">
    <property type="component" value="Chromosome"/>
</dbReference>
<dbReference type="GO" id="GO:0005886">
    <property type="term" value="C:plasma membrane"/>
    <property type="evidence" value="ECO:0007669"/>
    <property type="project" value="UniProtKB-SubCell"/>
</dbReference>
<dbReference type="GO" id="GO:0004766">
    <property type="term" value="F:spermidine synthase activity"/>
    <property type="evidence" value="ECO:0007669"/>
    <property type="project" value="UniProtKB-UniRule"/>
</dbReference>
<dbReference type="GO" id="GO:0010487">
    <property type="term" value="F:thermospermine synthase activity"/>
    <property type="evidence" value="ECO:0007669"/>
    <property type="project" value="UniProtKB-ARBA"/>
</dbReference>
<dbReference type="GO" id="GO:0006596">
    <property type="term" value="P:polyamine biosynthetic process"/>
    <property type="evidence" value="ECO:0000318"/>
    <property type="project" value="GO_Central"/>
</dbReference>
<dbReference type="GO" id="GO:0008295">
    <property type="term" value="P:spermidine biosynthetic process"/>
    <property type="evidence" value="ECO:0007669"/>
    <property type="project" value="UniProtKB-UniRule"/>
</dbReference>
<dbReference type="CDD" id="cd02440">
    <property type="entry name" value="AdoMet_MTases"/>
    <property type="match status" value="1"/>
</dbReference>
<dbReference type="FunFam" id="3.40.50.150:FF:000088">
    <property type="entry name" value="Polyamine aminopropyltransferase"/>
    <property type="match status" value="1"/>
</dbReference>
<dbReference type="Gene3D" id="3.40.50.150">
    <property type="entry name" value="Vaccinia Virus protein VP39"/>
    <property type="match status" value="1"/>
</dbReference>
<dbReference type="HAMAP" id="MF_00198">
    <property type="entry name" value="Spermidine_synth"/>
    <property type="match status" value="1"/>
</dbReference>
<dbReference type="InterPro" id="IPR036259">
    <property type="entry name" value="MFS_trans_sf"/>
</dbReference>
<dbReference type="InterPro" id="IPR030374">
    <property type="entry name" value="PABS"/>
</dbReference>
<dbReference type="InterPro" id="IPR029063">
    <property type="entry name" value="SAM-dependent_MTases_sf"/>
</dbReference>
<dbReference type="InterPro" id="IPR001045">
    <property type="entry name" value="Spermi_synthase"/>
</dbReference>
<dbReference type="NCBIfam" id="NF002956">
    <property type="entry name" value="PRK03612.1"/>
    <property type="match status" value="1"/>
</dbReference>
<dbReference type="PANTHER" id="PTHR43317">
    <property type="entry name" value="THERMOSPERMINE SYNTHASE ACAULIS5"/>
    <property type="match status" value="1"/>
</dbReference>
<dbReference type="PANTHER" id="PTHR43317:SF1">
    <property type="entry name" value="THERMOSPERMINE SYNTHASE ACAULIS5"/>
    <property type="match status" value="1"/>
</dbReference>
<dbReference type="Pfam" id="PF01564">
    <property type="entry name" value="Spermine_synth"/>
    <property type="match status" value="1"/>
</dbReference>
<dbReference type="SUPFAM" id="SSF103473">
    <property type="entry name" value="MFS general substrate transporter"/>
    <property type="match status" value="1"/>
</dbReference>
<dbReference type="SUPFAM" id="SSF53335">
    <property type="entry name" value="S-adenosyl-L-methionine-dependent methyltransferases"/>
    <property type="match status" value="1"/>
</dbReference>
<dbReference type="PROSITE" id="PS51006">
    <property type="entry name" value="PABS_2"/>
    <property type="match status" value="1"/>
</dbReference>
<accession>Q9L091</accession>
<sequence>MSSALDDRAVAAPPNPPADHHTRGARFLLLLAVFLCAACGLVYELALTALGSYLIGNSVLQTSVVISVMVFAMGVGSLAAKPLRHRPVVAFAVVEGVLALVGGLSVLMLYAAFAWLQLYMPAMIVVSLVVGLLIGAEIPLLMTLLQRIRTQEASSAVADMFAVDYIGALVGGLCFPLFLLPTFGQLKGALVVGVVNAVAGVIVVVFIFRRQTGRLVKAGLLAGVALVLAALGTTYVLADDLEVTARQHMYADPIIHSETTQYQDIVVTRSTAFTGEPDVRLFLNGDLQFSSVDEYRYHESLVHPALSGPHSNVLIMGGGDGLALREVLRHEGVRHVTLVELDPAMTRLARTFEPLRKLNQGSLDDPRAKVVNADAFTWLREARQQYDAVIIDFPDPDSASLAKLYSVEFYDLLRRVLAPDGQVMVQSGSPFFAPKTYWSIAKTIETAGYATTEFQIDVPSFGNWGFVLARPGTEAPPLRLARDTPKLRYLDAAVLKAATVFPVDRRRTDVRPSTLMDPAVLEYVQDEWRDY</sequence>
<protein>
    <recommendedName>
        <fullName evidence="1">Polyamine aminopropyltransferase 1</fullName>
    </recommendedName>
    <alternativeName>
        <fullName evidence="1">Putrescine aminopropyltransferase 1</fullName>
        <shortName evidence="1">PAPT 1</shortName>
    </alternativeName>
    <alternativeName>
        <fullName evidence="1">Spermidine synthase 1</fullName>
        <shortName evidence="1">SPDS 1</shortName>
        <shortName evidence="1">SPDSY 1</shortName>
        <ecNumber evidence="1">2.5.1.16</ecNumber>
    </alternativeName>
</protein>
<proteinExistence type="inferred from homology"/>
<reference key="1">
    <citation type="journal article" date="2002" name="Nature">
        <title>Complete genome sequence of the model actinomycete Streptomyces coelicolor A3(2).</title>
        <authorList>
            <person name="Bentley S.D."/>
            <person name="Chater K.F."/>
            <person name="Cerdeno-Tarraga A.-M."/>
            <person name="Challis G.L."/>
            <person name="Thomson N.R."/>
            <person name="James K.D."/>
            <person name="Harris D.E."/>
            <person name="Quail M.A."/>
            <person name="Kieser H."/>
            <person name="Harper D."/>
            <person name="Bateman A."/>
            <person name="Brown S."/>
            <person name="Chandra G."/>
            <person name="Chen C.W."/>
            <person name="Collins M."/>
            <person name="Cronin A."/>
            <person name="Fraser A."/>
            <person name="Goble A."/>
            <person name="Hidalgo J."/>
            <person name="Hornsby T."/>
            <person name="Howarth S."/>
            <person name="Huang C.-H."/>
            <person name="Kieser T."/>
            <person name="Larke L."/>
            <person name="Murphy L.D."/>
            <person name="Oliver K."/>
            <person name="O'Neil S."/>
            <person name="Rabbinowitsch E."/>
            <person name="Rajandream M.A."/>
            <person name="Rutherford K.M."/>
            <person name="Rutter S."/>
            <person name="Seeger K."/>
            <person name="Saunders D."/>
            <person name="Sharp S."/>
            <person name="Squares R."/>
            <person name="Squares S."/>
            <person name="Taylor K."/>
            <person name="Warren T."/>
            <person name="Wietzorrek A."/>
            <person name="Woodward J.R."/>
            <person name="Barrell B.G."/>
            <person name="Parkhill J."/>
            <person name="Hopwood D.A."/>
        </authorList>
    </citation>
    <scope>NUCLEOTIDE SEQUENCE [LARGE SCALE GENOMIC DNA]</scope>
    <source>
        <strain>ATCC BAA-471 / A3(2) / M145</strain>
    </source>
</reference>
<keyword id="KW-1003">Cell membrane</keyword>
<keyword id="KW-0472">Membrane</keyword>
<keyword id="KW-0620">Polyamine biosynthesis</keyword>
<keyword id="KW-1185">Reference proteome</keyword>
<keyword id="KW-0745">Spermidine biosynthesis</keyword>
<keyword id="KW-0808">Transferase</keyword>
<keyword id="KW-0812">Transmembrane</keyword>
<keyword id="KW-1133">Transmembrane helix</keyword>